<keyword id="KW-0028">Amino-acid biosynthesis</keyword>
<keyword id="KW-0963">Cytoplasm</keyword>
<keyword id="KW-0368">Histidine biosynthesis</keyword>
<keyword id="KW-0413">Isomerase</keyword>
<keyword id="KW-1185">Reference proteome</keyword>
<evidence type="ECO:0000255" key="1">
    <source>
        <dbReference type="HAMAP-Rule" id="MF_01014"/>
    </source>
</evidence>
<feature type="chain" id="PRO_1000063208" description="1-(5-phosphoribosyl)-5-[(5-phosphoribosylamino)methylideneamino] imidazole-4-carboxamide isomerase">
    <location>
        <begin position="1"/>
        <end position="241"/>
    </location>
</feature>
<feature type="active site" description="Proton acceptor" evidence="1">
    <location>
        <position position="8"/>
    </location>
</feature>
<feature type="active site" description="Proton donor" evidence="1">
    <location>
        <position position="130"/>
    </location>
</feature>
<name>HIS4_FLAPJ</name>
<sequence>MRIIPAIDIIDGKCVRLSKGDYNTKIIYNENPLEVAKKFEAHGVQYLHLVDLDGAKSSQIINYKILEKIASQTALKIDFGGGLKSDNDLRIAFESGANQITGGSIAVKNPEVFNEWIIKYGADKIILGADANNEKVAISGWLEESKEELIPFIQNYQNQGIEYVICTDIAKDGMLAGPSFNLYAKILSETKGIKLIASGGISTFDELPKLAQLGCEGTIIGKAIYENRITLKQLENFILNK</sequence>
<gene>
    <name evidence="1" type="primary">hisA</name>
    <name type="ordered locus">FP0955</name>
</gene>
<comment type="catalytic activity">
    <reaction evidence="1">
        <text>1-(5-phospho-beta-D-ribosyl)-5-[(5-phospho-beta-D-ribosylamino)methylideneamino]imidazole-4-carboxamide = 5-[(5-phospho-1-deoxy-D-ribulos-1-ylimino)methylamino]-1-(5-phospho-beta-D-ribosyl)imidazole-4-carboxamide</text>
        <dbReference type="Rhea" id="RHEA:15469"/>
        <dbReference type="ChEBI" id="CHEBI:58435"/>
        <dbReference type="ChEBI" id="CHEBI:58525"/>
        <dbReference type="EC" id="5.3.1.16"/>
    </reaction>
</comment>
<comment type="pathway">
    <text evidence="1">Amino-acid biosynthesis; L-histidine biosynthesis; L-histidine from 5-phospho-alpha-D-ribose 1-diphosphate: step 4/9.</text>
</comment>
<comment type="subcellular location">
    <subcellularLocation>
        <location evidence="1">Cytoplasm</location>
    </subcellularLocation>
</comment>
<comment type="similarity">
    <text evidence="1">Belongs to the HisA/HisF family.</text>
</comment>
<proteinExistence type="inferred from homology"/>
<organism>
    <name type="scientific">Flavobacterium psychrophilum (strain ATCC 49511 / DSM 21280 / CIP 103535 / JIP02/86)</name>
    <dbReference type="NCBI Taxonomy" id="402612"/>
    <lineage>
        <taxon>Bacteria</taxon>
        <taxon>Pseudomonadati</taxon>
        <taxon>Bacteroidota</taxon>
        <taxon>Flavobacteriia</taxon>
        <taxon>Flavobacteriales</taxon>
        <taxon>Flavobacteriaceae</taxon>
        <taxon>Flavobacterium</taxon>
    </lineage>
</organism>
<dbReference type="EC" id="5.3.1.16" evidence="1"/>
<dbReference type="EMBL" id="AM398681">
    <property type="protein sequence ID" value="CAL43049.1"/>
    <property type="molecule type" value="Genomic_DNA"/>
</dbReference>
<dbReference type="RefSeq" id="WP_011963103.1">
    <property type="nucleotide sequence ID" value="NC_009613.3"/>
</dbReference>
<dbReference type="RefSeq" id="YP_001295863.1">
    <property type="nucleotide sequence ID" value="NC_009613.3"/>
</dbReference>
<dbReference type="SMR" id="A6GY76"/>
<dbReference type="STRING" id="402612.FP0955"/>
<dbReference type="EnsemblBacteria" id="CAL43049">
    <property type="protein sequence ID" value="CAL43049"/>
    <property type="gene ID" value="FP0955"/>
</dbReference>
<dbReference type="GeneID" id="66552353"/>
<dbReference type="KEGG" id="fps:FP0955"/>
<dbReference type="PATRIC" id="fig|402612.5.peg.966"/>
<dbReference type="eggNOG" id="COG0106">
    <property type="taxonomic scope" value="Bacteria"/>
</dbReference>
<dbReference type="HOGENOM" id="CLU_048577_1_2_10"/>
<dbReference type="OrthoDB" id="9807749at2"/>
<dbReference type="UniPathway" id="UPA00031">
    <property type="reaction ID" value="UER00009"/>
</dbReference>
<dbReference type="Proteomes" id="UP000006394">
    <property type="component" value="Chromosome"/>
</dbReference>
<dbReference type="GO" id="GO:0005737">
    <property type="term" value="C:cytoplasm"/>
    <property type="evidence" value="ECO:0007669"/>
    <property type="project" value="UniProtKB-SubCell"/>
</dbReference>
<dbReference type="GO" id="GO:0003949">
    <property type="term" value="F:1-(5-phosphoribosyl)-5-[(5-phosphoribosylamino)methylideneamino]imidazole-4-carboxamide isomerase activity"/>
    <property type="evidence" value="ECO:0007669"/>
    <property type="project" value="UniProtKB-UniRule"/>
</dbReference>
<dbReference type="GO" id="GO:0000105">
    <property type="term" value="P:L-histidine biosynthetic process"/>
    <property type="evidence" value="ECO:0007669"/>
    <property type="project" value="UniProtKB-UniRule"/>
</dbReference>
<dbReference type="GO" id="GO:0000162">
    <property type="term" value="P:L-tryptophan biosynthetic process"/>
    <property type="evidence" value="ECO:0007669"/>
    <property type="project" value="TreeGrafter"/>
</dbReference>
<dbReference type="CDD" id="cd04732">
    <property type="entry name" value="HisA"/>
    <property type="match status" value="1"/>
</dbReference>
<dbReference type="FunFam" id="3.20.20.70:FF:000009">
    <property type="entry name" value="1-(5-phosphoribosyl)-5-[(5-phosphoribosylamino)methylideneamino] imidazole-4-carboxamide isomerase"/>
    <property type="match status" value="1"/>
</dbReference>
<dbReference type="Gene3D" id="3.20.20.70">
    <property type="entry name" value="Aldolase class I"/>
    <property type="match status" value="1"/>
</dbReference>
<dbReference type="HAMAP" id="MF_01014">
    <property type="entry name" value="HisA"/>
    <property type="match status" value="1"/>
</dbReference>
<dbReference type="InterPro" id="IPR013785">
    <property type="entry name" value="Aldolase_TIM"/>
</dbReference>
<dbReference type="InterPro" id="IPR006062">
    <property type="entry name" value="His_biosynth"/>
</dbReference>
<dbReference type="InterPro" id="IPR006063">
    <property type="entry name" value="HisA_bact_arch"/>
</dbReference>
<dbReference type="InterPro" id="IPR044524">
    <property type="entry name" value="Isoase_HisA-like"/>
</dbReference>
<dbReference type="InterPro" id="IPR023016">
    <property type="entry name" value="Isoase_HisA-like_bact"/>
</dbReference>
<dbReference type="InterPro" id="IPR011060">
    <property type="entry name" value="RibuloseP-bd_barrel"/>
</dbReference>
<dbReference type="NCBIfam" id="TIGR00007">
    <property type="entry name" value="1-(5-phosphoribosyl)-5-[(5-phosphoribosylamino)methylideneamino]imidazole-4-carboxamide isomerase"/>
    <property type="match status" value="1"/>
</dbReference>
<dbReference type="PANTHER" id="PTHR43090">
    <property type="entry name" value="1-(5-PHOSPHORIBOSYL)-5-[(5-PHOSPHORIBOSYLAMINO)METHYLIDENEAMINO] IMIDAZOLE-4-CARBOXAMIDE ISOMERASE"/>
    <property type="match status" value="1"/>
</dbReference>
<dbReference type="PANTHER" id="PTHR43090:SF2">
    <property type="entry name" value="1-(5-PHOSPHORIBOSYL)-5-[(5-PHOSPHORIBOSYLAMINO)METHYLIDENEAMINO] IMIDAZOLE-4-CARBOXAMIDE ISOMERASE"/>
    <property type="match status" value="1"/>
</dbReference>
<dbReference type="Pfam" id="PF00977">
    <property type="entry name" value="His_biosynth"/>
    <property type="match status" value="1"/>
</dbReference>
<dbReference type="SUPFAM" id="SSF51366">
    <property type="entry name" value="Ribulose-phoshate binding barrel"/>
    <property type="match status" value="1"/>
</dbReference>
<reference key="1">
    <citation type="journal article" date="2007" name="Nat. Biotechnol.">
        <title>Complete genome sequence of the fish pathogen Flavobacterium psychrophilum.</title>
        <authorList>
            <person name="Duchaud E."/>
            <person name="Boussaha M."/>
            <person name="Loux V."/>
            <person name="Bernardet J.-F."/>
            <person name="Michel C."/>
            <person name="Kerouault B."/>
            <person name="Mondot S."/>
            <person name="Nicolas P."/>
            <person name="Bossy R."/>
            <person name="Caron C."/>
            <person name="Bessieres P."/>
            <person name="Gibrat J.-F."/>
            <person name="Claverol S."/>
            <person name="Dumetz F."/>
            <person name="Le Henaff M."/>
            <person name="Benmansour A."/>
        </authorList>
    </citation>
    <scope>NUCLEOTIDE SEQUENCE [LARGE SCALE GENOMIC DNA]</scope>
    <source>
        <strain>ATCC 49511 / DSM 21280 / CIP 103535 / JIP02/86</strain>
    </source>
</reference>
<protein>
    <recommendedName>
        <fullName evidence="1">1-(5-phosphoribosyl)-5-[(5-phosphoribosylamino)methylideneamino] imidazole-4-carboxamide isomerase</fullName>
        <ecNumber evidence="1">5.3.1.16</ecNumber>
    </recommendedName>
    <alternativeName>
        <fullName evidence="1">Phosphoribosylformimino-5-aminoimidazole carboxamide ribotide isomerase</fullName>
    </alternativeName>
</protein>
<accession>A6GY76</accession>